<keyword id="KW-0963">Cytoplasm</keyword>
<keyword id="KW-0413">Isomerase</keyword>
<keyword id="KW-0464">Manganese</keyword>
<keyword id="KW-0479">Metal-binding</keyword>
<keyword id="KW-0684">Rhamnose metabolism</keyword>
<proteinExistence type="inferred from homology"/>
<sequence length="419" mass="47457">MTTQLEQAWELAKQRFAAVGIDVEEALRQLDRLPVSMHCWQGDDVAGFENPEGSLTGGIQSTGNYPGKARNATELRADLEQALRLIPGPKRLNLHAIYLESDTPVARDQIKPEHFKNWVEWAKANRLGLDFNPTCFSHPLSADGFTLSHPDAKIRQFWIDHCKASRRVSAYFGEQLGTPSVMNIWIPDGMKDITVDRLAPRQRLLEALDEVISEKFDPAHHIDAVESKLFGIGAESYTVGSNEFYMGYATSRQTALCLDAGHFHPTEVISDKISAAMLYVPRLLLHVSRPVRWDSDHVVLLDDETQAIASEIVRHNLFDRVHIGLDFFDASINRVAAWVIGTRNMKKALLRALLEPTDQLRQLEASGDYTARLALLEEQKSLPWQAVWEMYCQRHDTPTGSQWLDSVRTYEKEILSKRS</sequence>
<comment type="function">
    <text evidence="1">Catalyzes the interconversion of L-rhamnose and L-rhamnulose.</text>
</comment>
<comment type="catalytic activity">
    <reaction evidence="1">
        <text>L-rhamnopyranose = L-rhamnulose</text>
        <dbReference type="Rhea" id="RHEA:23160"/>
        <dbReference type="ChEBI" id="CHEBI:17897"/>
        <dbReference type="ChEBI" id="CHEBI:62346"/>
        <dbReference type="EC" id="5.3.1.14"/>
    </reaction>
</comment>
<comment type="cofactor">
    <cofactor evidence="1">
        <name>Mn(2+)</name>
        <dbReference type="ChEBI" id="CHEBI:29035"/>
    </cofactor>
    <text evidence="1">Binds 1 Mn(2+) ion per subunit.</text>
</comment>
<comment type="pathway">
    <text evidence="1">Carbohydrate degradation; L-rhamnose degradation; glycerone phosphate from L-rhamnose: step 1/3.</text>
</comment>
<comment type="subunit">
    <text evidence="1">Homotetramer.</text>
</comment>
<comment type="subcellular location">
    <subcellularLocation>
        <location evidence="1">Cytoplasm</location>
    </subcellularLocation>
</comment>
<comment type="similarity">
    <text evidence="1">Belongs to the rhamnose isomerase family.</text>
</comment>
<reference key="1">
    <citation type="submission" date="2007-11" db="EMBL/GenBank/DDBJ databases">
        <authorList>
            <consortium name="The Salmonella enterica serovar Paratyphi B Genome Sequencing Project"/>
            <person name="McClelland M."/>
            <person name="Sanderson E.K."/>
            <person name="Porwollik S."/>
            <person name="Spieth J."/>
            <person name="Clifton W.S."/>
            <person name="Fulton R."/>
            <person name="Cordes M."/>
            <person name="Wollam A."/>
            <person name="Shah N."/>
            <person name="Pepin K."/>
            <person name="Bhonagiri V."/>
            <person name="Nash W."/>
            <person name="Johnson M."/>
            <person name="Thiruvilangam P."/>
            <person name="Wilson R."/>
        </authorList>
    </citation>
    <scope>NUCLEOTIDE SEQUENCE [LARGE SCALE GENOMIC DNA]</scope>
    <source>
        <strain>ATCC BAA-1250 / SPB7</strain>
    </source>
</reference>
<dbReference type="EC" id="5.3.1.14" evidence="1"/>
<dbReference type="EMBL" id="CP000886">
    <property type="protein sequence ID" value="ABX70303.1"/>
    <property type="molecule type" value="Genomic_DNA"/>
</dbReference>
<dbReference type="RefSeq" id="WP_000211472.1">
    <property type="nucleotide sequence ID" value="NC_010102.1"/>
</dbReference>
<dbReference type="SMR" id="A9MZC5"/>
<dbReference type="KEGG" id="spq:SPAB_05012"/>
<dbReference type="PATRIC" id="fig|1016998.12.peg.4704"/>
<dbReference type="HOGENOM" id="CLU_052790_0_0_6"/>
<dbReference type="BioCyc" id="SENT1016998:SPAB_RS20395-MONOMER"/>
<dbReference type="UniPathway" id="UPA00541">
    <property type="reaction ID" value="UER00601"/>
</dbReference>
<dbReference type="Proteomes" id="UP000008556">
    <property type="component" value="Chromosome"/>
</dbReference>
<dbReference type="GO" id="GO:0005737">
    <property type="term" value="C:cytoplasm"/>
    <property type="evidence" value="ECO:0007669"/>
    <property type="project" value="UniProtKB-SubCell"/>
</dbReference>
<dbReference type="GO" id="GO:0008740">
    <property type="term" value="F:L-rhamnose isomerase activity"/>
    <property type="evidence" value="ECO:0007669"/>
    <property type="project" value="UniProtKB-UniRule"/>
</dbReference>
<dbReference type="GO" id="GO:0030145">
    <property type="term" value="F:manganese ion binding"/>
    <property type="evidence" value="ECO:0007669"/>
    <property type="project" value="UniProtKB-UniRule"/>
</dbReference>
<dbReference type="GO" id="GO:0019324">
    <property type="term" value="P:L-lyxose metabolic process"/>
    <property type="evidence" value="ECO:0007669"/>
    <property type="project" value="TreeGrafter"/>
</dbReference>
<dbReference type="GO" id="GO:0019301">
    <property type="term" value="P:rhamnose catabolic process"/>
    <property type="evidence" value="ECO:0007669"/>
    <property type="project" value="UniProtKB-UniRule"/>
</dbReference>
<dbReference type="FunFam" id="3.20.20.150:FF:000006">
    <property type="entry name" value="L-rhamnose isomerase"/>
    <property type="match status" value="1"/>
</dbReference>
<dbReference type="Gene3D" id="3.20.20.150">
    <property type="entry name" value="Divalent-metal-dependent TIM barrel enzymes"/>
    <property type="match status" value="1"/>
</dbReference>
<dbReference type="HAMAP" id="MF_00541">
    <property type="entry name" value="RhaA"/>
    <property type="match status" value="1"/>
</dbReference>
<dbReference type="InterPro" id="IPR050337">
    <property type="entry name" value="L-rhamnose_isomerase"/>
</dbReference>
<dbReference type="InterPro" id="IPR009308">
    <property type="entry name" value="Rhamnose_isomerase"/>
</dbReference>
<dbReference type="InterPro" id="IPR036237">
    <property type="entry name" value="Xyl_isomerase-like_sf"/>
</dbReference>
<dbReference type="NCBIfam" id="NF002203">
    <property type="entry name" value="PRK01076.1"/>
    <property type="match status" value="1"/>
</dbReference>
<dbReference type="NCBIfam" id="TIGR01748">
    <property type="entry name" value="rhaA"/>
    <property type="match status" value="1"/>
</dbReference>
<dbReference type="PANTHER" id="PTHR30268">
    <property type="entry name" value="L-RHAMNOSE ISOMERASE"/>
    <property type="match status" value="1"/>
</dbReference>
<dbReference type="PANTHER" id="PTHR30268:SF0">
    <property type="entry name" value="L-RHAMNOSE ISOMERASE"/>
    <property type="match status" value="1"/>
</dbReference>
<dbReference type="Pfam" id="PF06134">
    <property type="entry name" value="RhaA"/>
    <property type="match status" value="1"/>
</dbReference>
<dbReference type="SUPFAM" id="SSF51658">
    <property type="entry name" value="Xylose isomerase-like"/>
    <property type="match status" value="1"/>
</dbReference>
<evidence type="ECO:0000255" key="1">
    <source>
        <dbReference type="HAMAP-Rule" id="MF_00541"/>
    </source>
</evidence>
<feature type="chain" id="PRO_1000081938" description="L-rhamnose isomerase">
    <location>
        <begin position="1"/>
        <end position="419"/>
    </location>
</feature>
<feature type="binding site" evidence="1">
    <location>
        <position position="262"/>
    </location>
    <ligand>
        <name>Mn(2+)</name>
        <dbReference type="ChEBI" id="CHEBI:29035"/>
    </ligand>
</feature>
<feature type="binding site" evidence="1">
    <location>
        <position position="294"/>
    </location>
    <ligand>
        <name>Mn(2+)</name>
        <dbReference type="ChEBI" id="CHEBI:29035"/>
    </ligand>
</feature>
<feature type="binding site" evidence="1">
    <location>
        <position position="296"/>
    </location>
    <ligand>
        <name>Mn(2+)</name>
        <dbReference type="ChEBI" id="CHEBI:29035"/>
    </ligand>
</feature>
<accession>A9MZC5</accession>
<name>RHAA_SALPB</name>
<organism>
    <name type="scientific">Salmonella paratyphi B (strain ATCC BAA-1250 / SPB7)</name>
    <dbReference type="NCBI Taxonomy" id="1016998"/>
    <lineage>
        <taxon>Bacteria</taxon>
        <taxon>Pseudomonadati</taxon>
        <taxon>Pseudomonadota</taxon>
        <taxon>Gammaproteobacteria</taxon>
        <taxon>Enterobacterales</taxon>
        <taxon>Enterobacteriaceae</taxon>
        <taxon>Salmonella</taxon>
    </lineage>
</organism>
<protein>
    <recommendedName>
        <fullName evidence="1">L-rhamnose isomerase</fullName>
        <ecNumber evidence="1">5.3.1.14</ecNumber>
    </recommendedName>
</protein>
<gene>
    <name evidence="1" type="primary">rhaA</name>
    <name type="ordered locus">SPAB_05012</name>
</gene>